<organism>
    <name type="scientific">Salmonella newport (strain SL254)</name>
    <dbReference type="NCBI Taxonomy" id="423368"/>
    <lineage>
        <taxon>Bacteria</taxon>
        <taxon>Pseudomonadati</taxon>
        <taxon>Pseudomonadota</taxon>
        <taxon>Gammaproteobacteria</taxon>
        <taxon>Enterobacterales</taxon>
        <taxon>Enterobacteriaceae</taxon>
        <taxon>Salmonella</taxon>
    </lineage>
</organism>
<dbReference type="EMBL" id="CP001113">
    <property type="protein sequence ID" value="ACF64442.1"/>
    <property type="molecule type" value="Genomic_DNA"/>
</dbReference>
<dbReference type="RefSeq" id="WP_000460663.1">
    <property type="nucleotide sequence ID" value="NZ_CCMR01000003.1"/>
</dbReference>
<dbReference type="SMR" id="B4SUQ6"/>
<dbReference type="KEGG" id="see:SNSL254_A3673"/>
<dbReference type="HOGENOM" id="CLU_133242_0_0_6"/>
<dbReference type="Proteomes" id="UP000008824">
    <property type="component" value="Chromosome"/>
</dbReference>
<dbReference type="HAMAP" id="MF_00598">
    <property type="entry name" value="Smg"/>
    <property type="match status" value="1"/>
</dbReference>
<dbReference type="InterPro" id="IPR007456">
    <property type="entry name" value="Smg"/>
</dbReference>
<dbReference type="NCBIfam" id="NF002897">
    <property type="entry name" value="PRK03430.1"/>
    <property type="match status" value="1"/>
</dbReference>
<dbReference type="PANTHER" id="PTHR38692">
    <property type="entry name" value="PROTEIN SMG"/>
    <property type="match status" value="1"/>
</dbReference>
<dbReference type="PANTHER" id="PTHR38692:SF1">
    <property type="entry name" value="PROTEIN SMG"/>
    <property type="match status" value="1"/>
</dbReference>
<dbReference type="Pfam" id="PF04361">
    <property type="entry name" value="DUF494"/>
    <property type="match status" value="1"/>
</dbReference>
<comment type="similarity">
    <text evidence="1">Belongs to the Smg family.</text>
</comment>
<accession>B4SUQ6</accession>
<protein>
    <recommendedName>
        <fullName evidence="1">Protein Smg</fullName>
    </recommendedName>
</protein>
<proteinExistence type="inferred from homology"/>
<evidence type="ECO:0000255" key="1">
    <source>
        <dbReference type="HAMAP-Rule" id="MF_00598"/>
    </source>
</evidence>
<feature type="chain" id="PRO_1000129902" description="Protein Smg">
    <location>
        <begin position="1"/>
        <end position="157"/>
    </location>
</feature>
<sequence>MFDVLMYLFETYIHNEAELRVDQDRLERDLTDAGFDREDIYNALLWLEKLADYQDGLAEPMQLASDPLSMRIYTVEECERLDASCRGFLLFLEQIQVLNLETREMVIERVLALDTAEFDLEDLKWVILMVLFNIPGCENAYQQMEELLFEVNEGMLH</sequence>
<gene>
    <name evidence="1" type="primary">smg</name>
    <name type="ordered locus">SNSL254_A3673</name>
</gene>
<reference key="1">
    <citation type="journal article" date="2011" name="J. Bacteriol.">
        <title>Comparative genomics of 28 Salmonella enterica isolates: evidence for CRISPR-mediated adaptive sublineage evolution.</title>
        <authorList>
            <person name="Fricke W.F."/>
            <person name="Mammel M.K."/>
            <person name="McDermott P.F."/>
            <person name="Tartera C."/>
            <person name="White D.G."/>
            <person name="Leclerc J.E."/>
            <person name="Ravel J."/>
            <person name="Cebula T.A."/>
        </authorList>
    </citation>
    <scope>NUCLEOTIDE SEQUENCE [LARGE SCALE GENOMIC DNA]</scope>
    <source>
        <strain>SL254</strain>
    </source>
</reference>
<name>SMG_SALNS</name>